<keyword id="KW-1185">Reference proteome</keyword>
<keyword id="KW-0687">Ribonucleoprotein</keyword>
<keyword id="KW-0690">Ribosome biogenesis</keyword>
<keyword id="KW-0698">rRNA processing</keyword>
<accession>A3DM90</accession>
<protein>
    <recommendedName>
        <fullName evidence="1">Ribosome biogenesis protein Nop10</fullName>
    </recommendedName>
</protein>
<sequence>MRWLMRKCIRCGRYTLNHDRCPYCGGELIVPHPPRFSPEDKYVAYRLEMKIKTGILDLNKIPVYDP</sequence>
<feature type="chain" id="PRO_1000047028" description="Ribosome biogenesis protein Nop10">
    <location>
        <begin position="1"/>
        <end position="66"/>
    </location>
</feature>
<comment type="function">
    <text evidence="1">Involved in ribosome biogenesis; more specifically in 18S rRNA pseudouridylation and in cleavage of pre-rRNA.</text>
</comment>
<comment type="similarity">
    <text evidence="1">Belongs to the NOP10 family.</text>
</comment>
<proteinExistence type="inferred from homology"/>
<gene>
    <name evidence="1" type="primary">nop10</name>
    <name type="ordered locus">Smar_0644</name>
</gene>
<name>NOP10_STAMF</name>
<dbReference type="EMBL" id="CP000575">
    <property type="protein sequence ID" value="ABN69750.1"/>
    <property type="molecule type" value="Genomic_DNA"/>
</dbReference>
<dbReference type="RefSeq" id="WP_011838941.1">
    <property type="nucleotide sequence ID" value="NC_009033.1"/>
</dbReference>
<dbReference type="SMR" id="A3DM90"/>
<dbReference type="STRING" id="399550.Smar_0644"/>
<dbReference type="KEGG" id="smr:Smar_0644"/>
<dbReference type="eggNOG" id="arCOG00906">
    <property type="taxonomic scope" value="Archaea"/>
</dbReference>
<dbReference type="HOGENOM" id="CLU_196480_0_0_2"/>
<dbReference type="OrthoDB" id="7259at2157"/>
<dbReference type="Proteomes" id="UP000000254">
    <property type="component" value="Chromosome"/>
</dbReference>
<dbReference type="GO" id="GO:1990904">
    <property type="term" value="C:ribonucleoprotein complex"/>
    <property type="evidence" value="ECO:0007669"/>
    <property type="project" value="UniProtKB-KW"/>
</dbReference>
<dbReference type="GO" id="GO:0030515">
    <property type="term" value="F:snoRNA binding"/>
    <property type="evidence" value="ECO:0007669"/>
    <property type="project" value="InterPro"/>
</dbReference>
<dbReference type="GO" id="GO:0001522">
    <property type="term" value="P:pseudouridine synthesis"/>
    <property type="evidence" value="ECO:0007669"/>
    <property type="project" value="InterPro"/>
</dbReference>
<dbReference type="GO" id="GO:0006364">
    <property type="term" value="P:rRNA processing"/>
    <property type="evidence" value="ECO:0007669"/>
    <property type="project" value="UniProtKB-UniRule"/>
</dbReference>
<dbReference type="Gene3D" id="2.20.28.40">
    <property type="entry name" value="H/ACA ribonucleoprotein complex, subunit Nop10"/>
    <property type="match status" value="1"/>
</dbReference>
<dbReference type="HAMAP" id="MF_00803">
    <property type="entry name" value="Nop10"/>
    <property type="match status" value="1"/>
</dbReference>
<dbReference type="InterPro" id="IPR007264">
    <property type="entry name" value="H/ACA_rnp_Nop10"/>
</dbReference>
<dbReference type="InterPro" id="IPR036756">
    <property type="entry name" value="H/ACA_rnp_Nop10_sf"/>
</dbReference>
<dbReference type="InterPro" id="IPR023532">
    <property type="entry name" value="Nop10_arc-typ"/>
</dbReference>
<dbReference type="NCBIfam" id="NF009623">
    <property type="entry name" value="PRK13130.1"/>
    <property type="match status" value="1"/>
</dbReference>
<dbReference type="Pfam" id="PF04135">
    <property type="entry name" value="Nop10p"/>
    <property type="match status" value="1"/>
</dbReference>
<dbReference type="SUPFAM" id="SSF144210">
    <property type="entry name" value="Nop10-like SnoRNP"/>
    <property type="match status" value="1"/>
</dbReference>
<evidence type="ECO:0000255" key="1">
    <source>
        <dbReference type="HAMAP-Rule" id="MF_00803"/>
    </source>
</evidence>
<organism>
    <name type="scientific">Staphylothermus marinus (strain ATCC 43588 / DSM 3639 / JCM 9404 / F1)</name>
    <dbReference type="NCBI Taxonomy" id="399550"/>
    <lineage>
        <taxon>Archaea</taxon>
        <taxon>Thermoproteota</taxon>
        <taxon>Thermoprotei</taxon>
        <taxon>Desulfurococcales</taxon>
        <taxon>Desulfurococcaceae</taxon>
        <taxon>Staphylothermus</taxon>
    </lineage>
</organism>
<reference key="1">
    <citation type="journal article" date="2009" name="BMC Genomics">
        <title>The complete genome sequence of Staphylothermus marinus reveals differences in sulfur metabolism among heterotrophic Crenarchaeota.</title>
        <authorList>
            <person name="Anderson I.J."/>
            <person name="Dharmarajan L."/>
            <person name="Rodriguez J."/>
            <person name="Hooper S."/>
            <person name="Porat I."/>
            <person name="Ulrich L.E."/>
            <person name="Elkins J.G."/>
            <person name="Mavromatis K."/>
            <person name="Sun H."/>
            <person name="Land M."/>
            <person name="Lapidus A."/>
            <person name="Lucas S."/>
            <person name="Barry K."/>
            <person name="Huber H."/>
            <person name="Zhulin I.B."/>
            <person name="Whitman W.B."/>
            <person name="Mukhopadhyay B."/>
            <person name="Woese C."/>
            <person name="Bristow J."/>
            <person name="Kyrpides N."/>
        </authorList>
    </citation>
    <scope>NUCLEOTIDE SEQUENCE [LARGE SCALE GENOMIC DNA]</scope>
    <source>
        <strain>ATCC 43588 / DSM 3639 / JCM 9404 / F1</strain>
    </source>
</reference>
<reference key="2">
    <citation type="journal article" date="2009" name="Stand. Genomic Sci.">
        <title>Complete genome sequence of Staphylothermus marinus Stetter and Fiala 1986 type strain F1.</title>
        <authorList>
            <person name="Anderson I.J."/>
            <person name="Sun H."/>
            <person name="Lapidus A."/>
            <person name="Copeland A."/>
            <person name="Glavina Del Rio T."/>
            <person name="Tice H."/>
            <person name="Dalin E."/>
            <person name="Lucas S."/>
            <person name="Barry K."/>
            <person name="Land M."/>
            <person name="Richardson P."/>
            <person name="Huber H."/>
            <person name="Kyrpides N.C."/>
        </authorList>
    </citation>
    <scope>NUCLEOTIDE SEQUENCE [LARGE SCALE GENOMIC DNA]</scope>
    <source>
        <strain>ATCC 43588 / DSM 3639 / JCM 9404 / F1</strain>
    </source>
</reference>